<dbReference type="EMBL" id="CP000562">
    <property type="protein sequence ID" value="ABN56518.1"/>
    <property type="molecule type" value="Genomic_DNA"/>
</dbReference>
<dbReference type="RefSeq" id="WP_011843428.1">
    <property type="nucleotide sequence ID" value="NC_009051.1"/>
</dbReference>
<dbReference type="SMR" id="A3CT18"/>
<dbReference type="STRING" id="368407.Memar_0585"/>
<dbReference type="GeneID" id="4847100"/>
<dbReference type="KEGG" id="mem:Memar_0585"/>
<dbReference type="eggNOG" id="arCOG04086">
    <property type="taxonomic scope" value="Archaea"/>
</dbReference>
<dbReference type="HOGENOM" id="CLU_055156_6_0_2"/>
<dbReference type="OrthoDB" id="6379at2157"/>
<dbReference type="Proteomes" id="UP000002146">
    <property type="component" value="Chromosome"/>
</dbReference>
<dbReference type="GO" id="GO:0022625">
    <property type="term" value="C:cytosolic large ribosomal subunit"/>
    <property type="evidence" value="ECO:0007669"/>
    <property type="project" value="TreeGrafter"/>
</dbReference>
<dbReference type="GO" id="GO:0003723">
    <property type="term" value="F:RNA binding"/>
    <property type="evidence" value="ECO:0007669"/>
    <property type="project" value="TreeGrafter"/>
</dbReference>
<dbReference type="GO" id="GO:0003735">
    <property type="term" value="F:structural constituent of ribosome"/>
    <property type="evidence" value="ECO:0007669"/>
    <property type="project" value="InterPro"/>
</dbReference>
<dbReference type="GO" id="GO:0000463">
    <property type="term" value="P:maturation of LSU-rRNA from tricistronic rRNA transcript (SSU-rRNA, 5.8S rRNA, LSU-rRNA)"/>
    <property type="evidence" value="ECO:0007669"/>
    <property type="project" value="TreeGrafter"/>
</dbReference>
<dbReference type="GO" id="GO:0006412">
    <property type="term" value="P:translation"/>
    <property type="evidence" value="ECO:0007669"/>
    <property type="project" value="UniProtKB-UniRule"/>
</dbReference>
<dbReference type="CDD" id="cd01657">
    <property type="entry name" value="Ribosomal_L7_archeal_euk"/>
    <property type="match status" value="1"/>
</dbReference>
<dbReference type="Gene3D" id="1.10.15.30">
    <property type="match status" value="1"/>
</dbReference>
<dbReference type="Gene3D" id="3.30.1390.20">
    <property type="entry name" value="Ribosomal protein L30, ferredoxin-like fold domain"/>
    <property type="match status" value="1"/>
</dbReference>
<dbReference type="HAMAP" id="MF_01371_A">
    <property type="entry name" value="Ribosomal_uL30_A"/>
    <property type="match status" value="1"/>
</dbReference>
<dbReference type="InterPro" id="IPR036919">
    <property type="entry name" value="Ribo_uL30_ferredoxin-like_sf"/>
</dbReference>
<dbReference type="InterPro" id="IPR039699">
    <property type="entry name" value="Ribosomal_uL30"/>
</dbReference>
<dbReference type="InterPro" id="IPR005997">
    <property type="entry name" value="Ribosomal_uL30_arc"/>
</dbReference>
<dbReference type="InterPro" id="IPR018038">
    <property type="entry name" value="Ribosomal_uL30_CS"/>
</dbReference>
<dbReference type="InterPro" id="IPR035808">
    <property type="entry name" value="Ribosomal_uL30_euk_arc"/>
</dbReference>
<dbReference type="InterPro" id="IPR016082">
    <property type="entry name" value="Ribosomal_uL30_ferredoxin-like"/>
</dbReference>
<dbReference type="NCBIfam" id="NF004711">
    <property type="entry name" value="PRK06049.1"/>
    <property type="match status" value="1"/>
</dbReference>
<dbReference type="NCBIfam" id="TIGR01309">
    <property type="entry name" value="uL30_arch"/>
    <property type="match status" value="1"/>
</dbReference>
<dbReference type="PANTHER" id="PTHR11524">
    <property type="entry name" value="60S RIBOSOMAL PROTEIN L7"/>
    <property type="match status" value="1"/>
</dbReference>
<dbReference type="PANTHER" id="PTHR11524:SF16">
    <property type="entry name" value="LARGE RIBOSOMAL SUBUNIT PROTEIN UL30"/>
    <property type="match status" value="1"/>
</dbReference>
<dbReference type="Pfam" id="PF00327">
    <property type="entry name" value="Ribosomal_L30"/>
    <property type="match status" value="1"/>
</dbReference>
<dbReference type="SUPFAM" id="SSF55129">
    <property type="entry name" value="Ribosomal protein L30p/L7e"/>
    <property type="match status" value="1"/>
</dbReference>
<dbReference type="PROSITE" id="PS00634">
    <property type="entry name" value="RIBOSOMAL_L30"/>
    <property type="match status" value="1"/>
</dbReference>
<feature type="chain" id="PRO_0000347167" description="Large ribosomal subunit protein uL30">
    <location>
        <begin position="1"/>
        <end position="153"/>
    </location>
</feature>
<comment type="subunit">
    <text evidence="1">Part of the 50S ribosomal subunit.</text>
</comment>
<comment type="similarity">
    <text evidence="1">Belongs to the universal ribosomal protein uL30 family.</text>
</comment>
<organism>
    <name type="scientific">Methanoculleus marisnigri (strain ATCC 35101 / DSM 1498 / JR1)</name>
    <dbReference type="NCBI Taxonomy" id="368407"/>
    <lineage>
        <taxon>Archaea</taxon>
        <taxon>Methanobacteriati</taxon>
        <taxon>Methanobacteriota</taxon>
        <taxon>Stenosarchaea group</taxon>
        <taxon>Methanomicrobia</taxon>
        <taxon>Methanomicrobiales</taxon>
        <taxon>Methanomicrobiaceae</taxon>
        <taxon>Methanoculleus</taxon>
    </lineage>
</organism>
<reference key="1">
    <citation type="journal article" date="2009" name="Stand. Genomic Sci.">
        <title>Complete genome sequence of Methanoculleus marisnigri Romesser et al. 1981 type strain JR1.</title>
        <authorList>
            <person name="Anderson I.J."/>
            <person name="Sieprawska-Lupa M."/>
            <person name="Lapidus A."/>
            <person name="Nolan M."/>
            <person name="Copeland A."/>
            <person name="Glavina Del Rio T."/>
            <person name="Tice H."/>
            <person name="Dalin E."/>
            <person name="Barry K."/>
            <person name="Saunders E."/>
            <person name="Han C."/>
            <person name="Brettin T."/>
            <person name="Detter J.C."/>
            <person name="Bruce D."/>
            <person name="Mikhailova N."/>
            <person name="Pitluck S."/>
            <person name="Hauser L."/>
            <person name="Land M."/>
            <person name="Lucas S."/>
            <person name="Richardson P."/>
            <person name="Whitman W.B."/>
            <person name="Kyrpides N.C."/>
        </authorList>
    </citation>
    <scope>NUCLEOTIDE SEQUENCE [LARGE SCALE GENOMIC DNA]</scope>
    <source>
        <strain>ATCC 35101 / DSM 1498 / JR1</strain>
    </source>
</reference>
<keyword id="KW-0687">Ribonucleoprotein</keyword>
<keyword id="KW-0689">Ribosomal protein</keyword>
<sequence length="153" mass="17520">MYAVVQVRGVVKTNHEIKDTLKMLRLHHVNHCVLVPDTPAYLGMIRKVKDFVAYGEVDKDTLATLLRTRGRLTGDEKLTDEYVRAHTPYADIDEFAAALCDGEMSFRDLVEIKPVLRLHPPRKGYKTIKRTFQQGGALGYYGPQINDLLYKMR</sequence>
<evidence type="ECO:0000255" key="1">
    <source>
        <dbReference type="HAMAP-Rule" id="MF_01371"/>
    </source>
</evidence>
<evidence type="ECO:0000305" key="2"/>
<gene>
    <name evidence="1" type="primary">rpl30</name>
    <name type="ordered locus">Memar_0585</name>
</gene>
<accession>A3CT18</accession>
<protein>
    <recommendedName>
        <fullName evidence="1">Large ribosomal subunit protein uL30</fullName>
    </recommendedName>
    <alternativeName>
        <fullName evidence="2">50S ribosomal protein L30</fullName>
    </alternativeName>
</protein>
<proteinExistence type="inferred from homology"/>
<name>RL30_METMJ</name>